<gene>
    <name evidence="6" type="primary">CT45A5</name>
    <name evidence="4" type="synonym">CT45-5</name>
</gene>
<keyword id="KW-0539">Nucleus</keyword>
<keyword id="KW-1185">Reference proteome</keyword>
<proteinExistence type="evidence at transcript level"/>
<protein>
    <recommendedName>
        <fullName evidence="6">Cancer/testis antigen family 45 member A5</fullName>
    </recommendedName>
    <alternativeName>
        <fullName evidence="4">Cancer/testis antigen 45-5</fullName>
    </alternativeName>
    <alternativeName>
        <fullName evidence="5">Cancer/testis antigen 45A5</fullName>
    </alternativeName>
</protein>
<dbReference type="EMBL" id="AY743713">
    <property type="protein sequence ID" value="AAW66468.1"/>
    <property type="molecule type" value="mRNA"/>
</dbReference>
<dbReference type="EMBL" id="AC240441">
    <property type="status" value="NOT_ANNOTATED_CDS"/>
    <property type="molecule type" value="Genomic_DNA"/>
</dbReference>
<dbReference type="EMBL" id="AL590618">
    <property type="protein sequence ID" value="CAI41550.1"/>
    <property type="molecule type" value="Genomic_DNA"/>
</dbReference>
<dbReference type="CCDS" id="CCDS35406.1"/>
<dbReference type="RefSeq" id="NP_001007552.2">
    <property type="nucleotide sequence ID" value="NM_001007551.6"/>
</dbReference>
<dbReference type="RefSeq" id="NP_001017438.2">
    <property type="nucleotide sequence ID" value="NM_001017438.2"/>
</dbReference>
<dbReference type="RefSeq" id="NP_001165759.2">
    <property type="nucleotide sequence ID" value="NM_001172288.2"/>
</dbReference>
<dbReference type="RefSeq" id="NP_001278456.1">
    <property type="nucleotide sequence ID" value="NM_001291527.1"/>
</dbReference>
<dbReference type="RefSeq" id="NP_001278457.1">
    <property type="nucleotide sequence ID" value="NM_001291528.1"/>
</dbReference>
<dbReference type="RefSeq" id="NP_001278458.1">
    <property type="nucleotide sequence ID" value="NM_001291529.1"/>
</dbReference>
<dbReference type="RefSeq" id="NP_001278459.1">
    <property type="nucleotide sequence ID" value="NM_001291530.1"/>
</dbReference>
<dbReference type="RefSeq" id="NP_001278472.1">
    <property type="nucleotide sequence ID" value="NM_001291543.1"/>
</dbReference>
<dbReference type="RefSeq" id="XP_003960131.1">
    <property type="nucleotide sequence ID" value="XM_003960082.4"/>
</dbReference>
<dbReference type="RefSeq" id="XP_005262482.2">
    <property type="nucleotide sequence ID" value="XM_005262425.4"/>
</dbReference>
<dbReference type="RefSeq" id="XP_011529531.1">
    <property type="nucleotide sequence ID" value="XM_011531229.2"/>
</dbReference>
<dbReference type="RefSeq" id="XP_011529540.1">
    <property type="nucleotide sequence ID" value="XM_011531238.2"/>
</dbReference>
<dbReference type="RefSeq" id="XP_011529541.1">
    <property type="nucleotide sequence ID" value="XM_011531239.1"/>
</dbReference>
<dbReference type="RefSeq" id="XP_011529643.1">
    <property type="nucleotide sequence ID" value="XM_011531341.2"/>
</dbReference>
<dbReference type="RefSeq" id="XP_011529653.1">
    <property type="nucleotide sequence ID" value="XM_011531351.1"/>
</dbReference>
<dbReference type="SMR" id="P0DMU8"/>
<dbReference type="FunCoup" id="P0DMU8">
    <property type="interactions" value="4"/>
</dbReference>
<dbReference type="STRING" id="9606.ENSP00000427342"/>
<dbReference type="iPTMnet" id="P0DMU8"/>
<dbReference type="PhosphoSitePlus" id="P0DMU8"/>
<dbReference type="BioMuta" id="CT45A5"/>
<dbReference type="jPOST" id="P0DMU8"/>
<dbReference type="MassIVE" id="P0DMU8"/>
<dbReference type="PaxDb" id="9606-ENSP00000427342"/>
<dbReference type="Pumba" id="P0DMU8"/>
<dbReference type="Antibodypedia" id="56380">
    <property type="antibodies" value="3 antibodies from 3 providers"/>
</dbReference>
<dbReference type="DNASU" id="441521"/>
<dbReference type="Ensembl" id="ENST00000487941.6">
    <property type="protein sequence ID" value="ENSP00000427342.2"/>
    <property type="gene ID" value="ENSG00000228836.9"/>
</dbReference>
<dbReference type="Ensembl" id="ENST00000617203.1">
    <property type="protein sequence ID" value="ENSP00000483658.1"/>
    <property type="gene ID" value="ENSG00000228836.9"/>
</dbReference>
<dbReference type="Ensembl" id="ENST00000698999.1">
    <property type="protein sequence ID" value="ENSP00000514077.1"/>
    <property type="gene ID" value="ENSG00000228836.9"/>
</dbReference>
<dbReference type="GeneID" id="101060211"/>
<dbReference type="GeneID" id="102723631"/>
<dbReference type="GeneID" id="441521"/>
<dbReference type="GeneID" id="541465"/>
<dbReference type="KEGG" id="hsa:101060211"/>
<dbReference type="KEGG" id="hsa:102723631"/>
<dbReference type="KEGG" id="hsa:441521"/>
<dbReference type="KEGG" id="hsa:541465"/>
<dbReference type="MANE-Select" id="ENST00000698999.1">
    <property type="protein sequence ID" value="ENSP00000514077.1"/>
    <property type="RefSeq nucleotide sequence ID" value="NM_001007551.6"/>
    <property type="RefSeq protein sequence ID" value="NP_001007552.2"/>
</dbReference>
<dbReference type="AGR" id="HGNC:33270"/>
<dbReference type="AGR" id="HGNC:33271"/>
<dbReference type="AGR" id="HGNC:51260"/>
<dbReference type="AGR" id="HGNC:51263"/>
<dbReference type="CTD" id="101060211"/>
<dbReference type="CTD" id="102723631"/>
<dbReference type="CTD" id="441521"/>
<dbReference type="CTD" id="541465"/>
<dbReference type="GeneCards" id="CT45A5"/>
<dbReference type="HGNC" id="HGNC:33270">
    <property type="gene designation" value="CT45A5"/>
</dbReference>
<dbReference type="HPA" id="ENSG00000228836">
    <property type="expression patterns" value="Tissue enhanced (brain, pituitary gland, testis)"/>
</dbReference>
<dbReference type="MIM" id="300796">
    <property type="type" value="gene"/>
</dbReference>
<dbReference type="neXtProt" id="NX_P0DMU8"/>
<dbReference type="OpenTargets" id="ENSG00000228836"/>
<dbReference type="OpenTargets" id="ENSG00000278289"/>
<dbReference type="VEuPathDB" id="HostDB:ENSG00000228836"/>
<dbReference type="eggNOG" id="KOG3768">
    <property type="taxonomic scope" value="Eukaryota"/>
</dbReference>
<dbReference type="InParanoid" id="P0DMU8"/>
<dbReference type="OMA" id="CHEWEAF"/>
<dbReference type="OrthoDB" id="9520782at2759"/>
<dbReference type="PAN-GO" id="P0DMU8">
    <property type="GO annotations" value="2 GO annotations based on evolutionary models"/>
</dbReference>
<dbReference type="PhylomeDB" id="P0DMU8"/>
<dbReference type="PathwayCommons" id="P0DMU8"/>
<dbReference type="BioGRID-ORCS" id="101060211">
    <property type="hits" value="9 hits in 105 CRISPR screens"/>
</dbReference>
<dbReference type="BioGRID-ORCS" id="102723631">
    <property type="hits" value="4 hits in 135 CRISPR screens"/>
</dbReference>
<dbReference type="BioGRID-ORCS" id="441521">
    <property type="hits" value="8 hits in 672 CRISPR screens"/>
</dbReference>
<dbReference type="BioGRID-ORCS" id="541465">
    <property type="hits" value="5 hits in 218 CRISPR screens"/>
</dbReference>
<dbReference type="Pharos" id="P0DMU8">
    <property type="development level" value="Tdark"/>
</dbReference>
<dbReference type="PRO" id="PR:P0DMU8"/>
<dbReference type="Proteomes" id="UP000005640">
    <property type="component" value="Chromosome X"/>
</dbReference>
<dbReference type="RNAct" id="P0DMU8">
    <property type="molecule type" value="protein"/>
</dbReference>
<dbReference type="Bgee" id="ENSG00000228836">
    <property type="expression patterns" value="Expressed in male germ line stem cell (sensu Vertebrata) in testis and 38 other cell types or tissues"/>
</dbReference>
<dbReference type="GO" id="GO:0005634">
    <property type="term" value="C:nucleus"/>
    <property type="evidence" value="ECO:0000314"/>
    <property type="project" value="UniProtKB"/>
</dbReference>
<dbReference type="InterPro" id="IPR029307">
    <property type="entry name" value="INT_SG_DDX_CT_C"/>
</dbReference>
<dbReference type="InterPro" id="IPR051113">
    <property type="entry name" value="Integrator_subunit6"/>
</dbReference>
<dbReference type="PANTHER" id="PTHR12957">
    <property type="entry name" value="DEAD/H BOX POLYPEPTIDE 26/DICE1-RELATED"/>
    <property type="match status" value="1"/>
</dbReference>
<dbReference type="PANTHER" id="PTHR12957:SF2">
    <property type="entry name" value="INTEGRATOR COMPLEX SUBUNIT 6"/>
    <property type="match status" value="1"/>
</dbReference>
<dbReference type="Pfam" id="PF15300">
    <property type="entry name" value="INT_SG_DDX_CT_C"/>
    <property type="match status" value="1"/>
</dbReference>
<name>CT455_HUMAN</name>
<reference key="1">
    <citation type="journal article" date="2005" name="Proc. Natl. Acad. Sci. U.S.A.">
        <title>Identification of cancer/testis-antigen genes by massively parallel signature sequencing.</title>
        <authorList>
            <person name="Chen Y.-T."/>
            <person name="Scanlan M.J."/>
            <person name="Venditti C.A."/>
            <person name="Chua R."/>
            <person name="Theiler G."/>
            <person name="Stevenson B.J."/>
            <person name="Iseli C."/>
            <person name="Gure A.O."/>
            <person name="Vasicek T."/>
            <person name="Strausberg R.L."/>
            <person name="Jongeneel C.V."/>
            <person name="Old L.J."/>
            <person name="Simpson A.J.G."/>
        </authorList>
    </citation>
    <scope>NUCLEOTIDE SEQUENCE [MRNA]</scope>
    <scope>TISSUE SPECIFICITY</scope>
    <scope>IDENTIFICATION AS A CANCER/TESTIS ANTIGEN</scope>
</reference>
<reference key="2">
    <citation type="journal article" date="2005" name="Nature">
        <title>The DNA sequence of the human X chromosome.</title>
        <authorList>
            <person name="Ross M.T."/>
            <person name="Grafham D.V."/>
            <person name="Coffey A.J."/>
            <person name="Scherer S."/>
            <person name="McLay K."/>
            <person name="Muzny D."/>
            <person name="Platzer M."/>
            <person name="Howell G.R."/>
            <person name="Burrows C."/>
            <person name="Bird C.P."/>
            <person name="Frankish A."/>
            <person name="Lovell F.L."/>
            <person name="Howe K.L."/>
            <person name="Ashurst J.L."/>
            <person name="Fulton R.S."/>
            <person name="Sudbrak R."/>
            <person name="Wen G."/>
            <person name="Jones M.C."/>
            <person name="Hurles M.E."/>
            <person name="Andrews T.D."/>
            <person name="Scott C.E."/>
            <person name="Searle S."/>
            <person name="Ramser J."/>
            <person name="Whittaker A."/>
            <person name="Deadman R."/>
            <person name="Carter N.P."/>
            <person name="Hunt S.E."/>
            <person name="Chen R."/>
            <person name="Cree A."/>
            <person name="Gunaratne P."/>
            <person name="Havlak P."/>
            <person name="Hodgson A."/>
            <person name="Metzker M.L."/>
            <person name="Richards S."/>
            <person name="Scott G."/>
            <person name="Steffen D."/>
            <person name="Sodergren E."/>
            <person name="Wheeler D.A."/>
            <person name="Worley K.C."/>
            <person name="Ainscough R."/>
            <person name="Ambrose K.D."/>
            <person name="Ansari-Lari M.A."/>
            <person name="Aradhya S."/>
            <person name="Ashwell R.I."/>
            <person name="Babbage A.K."/>
            <person name="Bagguley C.L."/>
            <person name="Ballabio A."/>
            <person name="Banerjee R."/>
            <person name="Barker G.E."/>
            <person name="Barlow K.F."/>
            <person name="Barrett I.P."/>
            <person name="Bates K.N."/>
            <person name="Beare D.M."/>
            <person name="Beasley H."/>
            <person name="Beasley O."/>
            <person name="Beck A."/>
            <person name="Bethel G."/>
            <person name="Blechschmidt K."/>
            <person name="Brady N."/>
            <person name="Bray-Allen S."/>
            <person name="Bridgeman A.M."/>
            <person name="Brown A.J."/>
            <person name="Brown M.J."/>
            <person name="Bonnin D."/>
            <person name="Bruford E.A."/>
            <person name="Buhay C."/>
            <person name="Burch P."/>
            <person name="Burford D."/>
            <person name="Burgess J."/>
            <person name="Burrill W."/>
            <person name="Burton J."/>
            <person name="Bye J.M."/>
            <person name="Carder C."/>
            <person name="Carrel L."/>
            <person name="Chako J."/>
            <person name="Chapman J.C."/>
            <person name="Chavez D."/>
            <person name="Chen E."/>
            <person name="Chen G."/>
            <person name="Chen Y."/>
            <person name="Chen Z."/>
            <person name="Chinault C."/>
            <person name="Ciccodicola A."/>
            <person name="Clark S.Y."/>
            <person name="Clarke G."/>
            <person name="Clee C.M."/>
            <person name="Clegg S."/>
            <person name="Clerc-Blankenburg K."/>
            <person name="Clifford K."/>
            <person name="Cobley V."/>
            <person name="Cole C.G."/>
            <person name="Conquer J.S."/>
            <person name="Corby N."/>
            <person name="Connor R.E."/>
            <person name="David R."/>
            <person name="Davies J."/>
            <person name="Davis C."/>
            <person name="Davis J."/>
            <person name="Delgado O."/>
            <person name="Deshazo D."/>
            <person name="Dhami P."/>
            <person name="Ding Y."/>
            <person name="Dinh H."/>
            <person name="Dodsworth S."/>
            <person name="Draper H."/>
            <person name="Dugan-Rocha S."/>
            <person name="Dunham A."/>
            <person name="Dunn M."/>
            <person name="Durbin K.J."/>
            <person name="Dutta I."/>
            <person name="Eades T."/>
            <person name="Ellwood M."/>
            <person name="Emery-Cohen A."/>
            <person name="Errington H."/>
            <person name="Evans K.L."/>
            <person name="Faulkner L."/>
            <person name="Francis F."/>
            <person name="Frankland J."/>
            <person name="Fraser A.E."/>
            <person name="Galgoczy P."/>
            <person name="Gilbert J."/>
            <person name="Gill R."/>
            <person name="Gloeckner G."/>
            <person name="Gregory S.G."/>
            <person name="Gribble S."/>
            <person name="Griffiths C."/>
            <person name="Grocock R."/>
            <person name="Gu Y."/>
            <person name="Gwilliam R."/>
            <person name="Hamilton C."/>
            <person name="Hart E.A."/>
            <person name="Hawes A."/>
            <person name="Heath P.D."/>
            <person name="Heitmann K."/>
            <person name="Hennig S."/>
            <person name="Hernandez J."/>
            <person name="Hinzmann B."/>
            <person name="Ho S."/>
            <person name="Hoffs M."/>
            <person name="Howden P.J."/>
            <person name="Huckle E.J."/>
            <person name="Hume J."/>
            <person name="Hunt P.J."/>
            <person name="Hunt A.R."/>
            <person name="Isherwood J."/>
            <person name="Jacob L."/>
            <person name="Johnson D."/>
            <person name="Jones S."/>
            <person name="de Jong P.J."/>
            <person name="Joseph S.S."/>
            <person name="Keenan S."/>
            <person name="Kelly S."/>
            <person name="Kershaw J.K."/>
            <person name="Khan Z."/>
            <person name="Kioschis P."/>
            <person name="Klages S."/>
            <person name="Knights A.J."/>
            <person name="Kosiura A."/>
            <person name="Kovar-Smith C."/>
            <person name="Laird G.K."/>
            <person name="Langford C."/>
            <person name="Lawlor S."/>
            <person name="Leversha M."/>
            <person name="Lewis L."/>
            <person name="Liu W."/>
            <person name="Lloyd C."/>
            <person name="Lloyd D.M."/>
            <person name="Loulseged H."/>
            <person name="Loveland J.E."/>
            <person name="Lovell J.D."/>
            <person name="Lozado R."/>
            <person name="Lu J."/>
            <person name="Lyne R."/>
            <person name="Ma J."/>
            <person name="Maheshwari M."/>
            <person name="Matthews L.H."/>
            <person name="McDowall J."/>
            <person name="McLaren S."/>
            <person name="McMurray A."/>
            <person name="Meidl P."/>
            <person name="Meitinger T."/>
            <person name="Milne S."/>
            <person name="Miner G."/>
            <person name="Mistry S.L."/>
            <person name="Morgan M."/>
            <person name="Morris S."/>
            <person name="Mueller I."/>
            <person name="Mullikin J.C."/>
            <person name="Nguyen N."/>
            <person name="Nordsiek G."/>
            <person name="Nyakatura G."/>
            <person name="O'dell C.N."/>
            <person name="Okwuonu G."/>
            <person name="Palmer S."/>
            <person name="Pandian R."/>
            <person name="Parker D."/>
            <person name="Parrish J."/>
            <person name="Pasternak S."/>
            <person name="Patel D."/>
            <person name="Pearce A.V."/>
            <person name="Pearson D.M."/>
            <person name="Pelan S.E."/>
            <person name="Perez L."/>
            <person name="Porter K.M."/>
            <person name="Ramsey Y."/>
            <person name="Reichwald K."/>
            <person name="Rhodes S."/>
            <person name="Ridler K.A."/>
            <person name="Schlessinger D."/>
            <person name="Schueler M.G."/>
            <person name="Sehra H.K."/>
            <person name="Shaw-Smith C."/>
            <person name="Shen H."/>
            <person name="Sheridan E.M."/>
            <person name="Shownkeen R."/>
            <person name="Skuce C.D."/>
            <person name="Smith M.L."/>
            <person name="Sotheran E.C."/>
            <person name="Steingruber H.E."/>
            <person name="Steward C.A."/>
            <person name="Storey R."/>
            <person name="Swann R.M."/>
            <person name="Swarbreck D."/>
            <person name="Tabor P.E."/>
            <person name="Taudien S."/>
            <person name="Taylor T."/>
            <person name="Teague B."/>
            <person name="Thomas K."/>
            <person name="Thorpe A."/>
            <person name="Timms K."/>
            <person name="Tracey A."/>
            <person name="Trevanion S."/>
            <person name="Tromans A.C."/>
            <person name="d'Urso M."/>
            <person name="Verduzco D."/>
            <person name="Villasana D."/>
            <person name="Waldron L."/>
            <person name="Wall M."/>
            <person name="Wang Q."/>
            <person name="Warren J."/>
            <person name="Warry G.L."/>
            <person name="Wei X."/>
            <person name="West A."/>
            <person name="Whitehead S.L."/>
            <person name="Whiteley M.N."/>
            <person name="Wilkinson J.E."/>
            <person name="Willey D.L."/>
            <person name="Williams G."/>
            <person name="Williams L."/>
            <person name="Williamson A."/>
            <person name="Williamson H."/>
            <person name="Wilming L."/>
            <person name="Woodmansey R.L."/>
            <person name="Wray P.W."/>
            <person name="Yen J."/>
            <person name="Zhang J."/>
            <person name="Zhou J."/>
            <person name="Zoghbi H."/>
            <person name="Zorilla S."/>
            <person name="Buck D."/>
            <person name="Reinhardt R."/>
            <person name="Poustka A."/>
            <person name="Rosenthal A."/>
            <person name="Lehrach H."/>
            <person name="Meindl A."/>
            <person name="Minx P.J."/>
            <person name="Hillier L.W."/>
            <person name="Willard H.F."/>
            <person name="Wilson R.K."/>
            <person name="Waterston R.H."/>
            <person name="Rice C.M."/>
            <person name="Vaudin M."/>
            <person name="Coulson A."/>
            <person name="Nelson D.L."/>
            <person name="Weinstock G."/>
            <person name="Sulston J.E."/>
            <person name="Durbin R.M."/>
            <person name="Hubbard T."/>
            <person name="Gibbs R.A."/>
            <person name="Beck S."/>
            <person name="Rogers J."/>
            <person name="Bentley D.R."/>
        </authorList>
    </citation>
    <scope>NUCLEOTIDE SEQUENCE [LARGE SCALE GENOMIC DNA]</scope>
</reference>
<reference key="3">
    <citation type="journal article" date="2019" name="J. Proteome Res.">
        <title>Cell Type-Specific Expression of Testis Elevated Genes Based on Transcriptomics and Antibody-Based Proteomics.</title>
        <authorList>
            <person name="Pineau C."/>
            <person name="Hikmet F."/>
            <person name="Zhang C."/>
            <person name="Oksvold P."/>
            <person name="Chen S."/>
            <person name="Fagerberg L."/>
            <person name="Uhlen M."/>
            <person name="Lindskog C."/>
        </authorList>
    </citation>
    <scope>SUBCELLULAR LOCATION</scope>
</reference>
<feature type="chain" id="PRO_0000308950" description="Cancer/testis antigen family 45 member A5">
    <location>
        <begin position="1"/>
        <end position="189"/>
    </location>
</feature>
<feature type="region of interest" description="Disordered" evidence="1">
    <location>
        <begin position="1"/>
        <end position="27"/>
    </location>
</feature>
<feature type="region of interest" description="Disordered" evidence="1">
    <location>
        <begin position="82"/>
        <end position="118"/>
    </location>
</feature>
<feature type="compositionally biased region" description="Basic and acidic residues" evidence="1">
    <location>
        <begin position="1"/>
        <end position="23"/>
    </location>
</feature>
<feature type="sequence conflict" description="In Ref. 1; AAW66468 and 2; CAI41550." evidence="5" ref="1 2">
    <original>S</original>
    <variation>N</variation>
    <location>
        <position position="101"/>
    </location>
</feature>
<feature type="sequence conflict" description="In Ref. 1; AAW66468 and 2; CAI41550." evidence="5" ref="1 2">
    <original>ET</original>
    <variation>GI</variation>
    <location>
        <begin position="111"/>
        <end position="112"/>
    </location>
</feature>
<feature type="sequence conflict" description="In Ref. 1; AAW66468 and 2; CAI41550." evidence="5" ref="1 2">
    <original>R</original>
    <variation>Q</variation>
    <location>
        <position position="120"/>
    </location>
</feature>
<feature type="sequence conflict" description="In Ref. 1; AAW66468 and 2; CAI41550." evidence="5" ref="1 2">
    <original>RKLVKELRCVGQ</original>
    <variation>CQVVKEIRCLGR</variation>
    <location>
        <begin position="128"/>
        <end position="139"/>
    </location>
</feature>
<comment type="subcellular location">
    <subcellularLocation>
        <location evidence="3">Nucleus</location>
    </subcellularLocation>
</comment>
<comment type="tissue specificity">
    <text evidence="2">Testis specific. Expressed in cancer cell lines.</text>
</comment>
<comment type="similarity">
    <text>Belongs to the CT45 family.</text>
</comment>
<sequence length="189" mass="21232">MTDKTEKVAVDPETVFKRPRECDSPSYQKRQRMALLARKQGAGDSLIAGSAMSKEKKLMTGHAIPPSQLDSQIDDFTGFSKDGMMQKPGSNAPVGGNVTSSFSGDDLECRETASSPKSQREINADIKRKLVKELRCVGQKYEKIFEMLEGVQGPTAVRKRFFESIIKEAARCMRRDFVKHLKKKLKRMI</sequence>
<evidence type="ECO:0000256" key="1">
    <source>
        <dbReference type="SAM" id="MobiDB-lite"/>
    </source>
</evidence>
<evidence type="ECO:0000269" key="2">
    <source>
    </source>
</evidence>
<evidence type="ECO:0000269" key="3">
    <source>
    </source>
</evidence>
<evidence type="ECO:0000303" key="4">
    <source>
    </source>
</evidence>
<evidence type="ECO:0000305" key="5"/>
<evidence type="ECO:0000312" key="6">
    <source>
        <dbReference type="HGNC" id="HGNC:33270"/>
    </source>
</evidence>
<organism>
    <name type="scientific">Homo sapiens</name>
    <name type="common">Human</name>
    <dbReference type="NCBI Taxonomy" id="9606"/>
    <lineage>
        <taxon>Eukaryota</taxon>
        <taxon>Metazoa</taxon>
        <taxon>Chordata</taxon>
        <taxon>Craniata</taxon>
        <taxon>Vertebrata</taxon>
        <taxon>Euteleostomi</taxon>
        <taxon>Mammalia</taxon>
        <taxon>Eutheria</taxon>
        <taxon>Euarchontoglires</taxon>
        <taxon>Primates</taxon>
        <taxon>Haplorrhini</taxon>
        <taxon>Catarrhini</taxon>
        <taxon>Hominidae</taxon>
        <taxon>Homo</taxon>
    </lineage>
</organism>
<accession>P0DMU8</accession>
<accession>A8K842</accession>
<accession>B7ZMC5</accession>
<accession>Q6NSH3</accession>